<gene>
    <name evidence="1" type="primary">rplQ</name>
    <name type="ordered locus">Daci_1048</name>
</gene>
<name>RL17_DELAS</name>
<reference key="1">
    <citation type="submission" date="2007-11" db="EMBL/GenBank/DDBJ databases">
        <title>Complete sequence of Delftia acidovorans DSM 14801 / SPH-1.</title>
        <authorList>
            <person name="Copeland A."/>
            <person name="Lucas S."/>
            <person name="Lapidus A."/>
            <person name="Barry K."/>
            <person name="Glavina del Rio T."/>
            <person name="Dalin E."/>
            <person name="Tice H."/>
            <person name="Pitluck S."/>
            <person name="Lowry S."/>
            <person name="Clum A."/>
            <person name="Schmutz J."/>
            <person name="Larimer F."/>
            <person name="Land M."/>
            <person name="Hauser L."/>
            <person name="Kyrpides N."/>
            <person name="Kim E."/>
            <person name="Schleheck D."/>
            <person name="Richardson P."/>
        </authorList>
    </citation>
    <scope>NUCLEOTIDE SEQUENCE [LARGE SCALE GENOMIC DNA]</scope>
    <source>
        <strain>DSM 14801 / SPH-1</strain>
    </source>
</reference>
<feature type="chain" id="PRO_1000144411" description="Large ribosomal subunit protein bL17">
    <location>
        <begin position="1"/>
        <end position="130"/>
    </location>
</feature>
<sequence length="130" mass="14739">MRHGHGLRKLNRTSSHRLAMLKNMMNSLIEHEAIKTTVPKAKELRRVIEPMITLAKVDTVANRRLAFDRLRDRDSVTKLFNELGPRFAKRPGGYTRILKMGFRVGDNAPMAFVELVERAEEGAAEAKAAE</sequence>
<organism>
    <name type="scientific">Delftia acidovorans (strain DSM 14801 / SPH-1)</name>
    <dbReference type="NCBI Taxonomy" id="398578"/>
    <lineage>
        <taxon>Bacteria</taxon>
        <taxon>Pseudomonadati</taxon>
        <taxon>Pseudomonadota</taxon>
        <taxon>Betaproteobacteria</taxon>
        <taxon>Burkholderiales</taxon>
        <taxon>Comamonadaceae</taxon>
        <taxon>Delftia</taxon>
    </lineage>
</organism>
<proteinExistence type="inferred from homology"/>
<dbReference type="EMBL" id="CP000884">
    <property type="protein sequence ID" value="ABX33693.1"/>
    <property type="molecule type" value="Genomic_DNA"/>
</dbReference>
<dbReference type="RefSeq" id="WP_012202979.1">
    <property type="nucleotide sequence ID" value="NC_010002.1"/>
</dbReference>
<dbReference type="SMR" id="A9BRX6"/>
<dbReference type="STRING" id="398578.Daci_1048"/>
<dbReference type="GeneID" id="94695179"/>
<dbReference type="KEGG" id="dac:Daci_1048"/>
<dbReference type="eggNOG" id="COG0203">
    <property type="taxonomic scope" value="Bacteria"/>
</dbReference>
<dbReference type="HOGENOM" id="CLU_074407_2_0_4"/>
<dbReference type="Proteomes" id="UP000000784">
    <property type="component" value="Chromosome"/>
</dbReference>
<dbReference type="GO" id="GO:0022625">
    <property type="term" value="C:cytosolic large ribosomal subunit"/>
    <property type="evidence" value="ECO:0007669"/>
    <property type="project" value="TreeGrafter"/>
</dbReference>
<dbReference type="GO" id="GO:0003735">
    <property type="term" value="F:structural constituent of ribosome"/>
    <property type="evidence" value="ECO:0007669"/>
    <property type="project" value="InterPro"/>
</dbReference>
<dbReference type="GO" id="GO:0006412">
    <property type="term" value="P:translation"/>
    <property type="evidence" value="ECO:0007669"/>
    <property type="project" value="UniProtKB-UniRule"/>
</dbReference>
<dbReference type="FunFam" id="3.90.1030.10:FF:000001">
    <property type="entry name" value="50S ribosomal protein L17"/>
    <property type="match status" value="1"/>
</dbReference>
<dbReference type="Gene3D" id="3.90.1030.10">
    <property type="entry name" value="Ribosomal protein L17"/>
    <property type="match status" value="1"/>
</dbReference>
<dbReference type="HAMAP" id="MF_01368">
    <property type="entry name" value="Ribosomal_bL17"/>
    <property type="match status" value="1"/>
</dbReference>
<dbReference type="InterPro" id="IPR000456">
    <property type="entry name" value="Ribosomal_bL17"/>
</dbReference>
<dbReference type="InterPro" id="IPR047859">
    <property type="entry name" value="Ribosomal_bL17_CS"/>
</dbReference>
<dbReference type="InterPro" id="IPR036373">
    <property type="entry name" value="Ribosomal_bL17_sf"/>
</dbReference>
<dbReference type="NCBIfam" id="TIGR00059">
    <property type="entry name" value="L17"/>
    <property type="match status" value="1"/>
</dbReference>
<dbReference type="PANTHER" id="PTHR14413:SF16">
    <property type="entry name" value="LARGE RIBOSOMAL SUBUNIT PROTEIN BL17M"/>
    <property type="match status" value="1"/>
</dbReference>
<dbReference type="PANTHER" id="PTHR14413">
    <property type="entry name" value="RIBOSOMAL PROTEIN L17"/>
    <property type="match status" value="1"/>
</dbReference>
<dbReference type="Pfam" id="PF01196">
    <property type="entry name" value="Ribosomal_L17"/>
    <property type="match status" value="1"/>
</dbReference>
<dbReference type="SUPFAM" id="SSF64263">
    <property type="entry name" value="Prokaryotic ribosomal protein L17"/>
    <property type="match status" value="1"/>
</dbReference>
<dbReference type="PROSITE" id="PS01167">
    <property type="entry name" value="RIBOSOMAL_L17"/>
    <property type="match status" value="1"/>
</dbReference>
<keyword id="KW-1185">Reference proteome</keyword>
<keyword id="KW-0687">Ribonucleoprotein</keyword>
<keyword id="KW-0689">Ribosomal protein</keyword>
<evidence type="ECO:0000255" key="1">
    <source>
        <dbReference type="HAMAP-Rule" id="MF_01368"/>
    </source>
</evidence>
<evidence type="ECO:0000305" key="2"/>
<accession>A9BRX6</accession>
<comment type="subunit">
    <text evidence="1">Part of the 50S ribosomal subunit. Contacts protein L32.</text>
</comment>
<comment type="similarity">
    <text evidence="1">Belongs to the bacterial ribosomal protein bL17 family.</text>
</comment>
<protein>
    <recommendedName>
        <fullName evidence="1">Large ribosomal subunit protein bL17</fullName>
    </recommendedName>
    <alternativeName>
        <fullName evidence="2">50S ribosomal protein L17</fullName>
    </alternativeName>
</protein>